<proteinExistence type="inferred from homology"/>
<name>YCIB_VIBVU</name>
<evidence type="ECO:0000255" key="1">
    <source>
        <dbReference type="HAMAP-Rule" id="MF_00189"/>
    </source>
</evidence>
<organism>
    <name type="scientific">Vibrio vulnificus (strain CMCP6)</name>
    <dbReference type="NCBI Taxonomy" id="216895"/>
    <lineage>
        <taxon>Bacteria</taxon>
        <taxon>Pseudomonadati</taxon>
        <taxon>Pseudomonadota</taxon>
        <taxon>Gammaproteobacteria</taxon>
        <taxon>Vibrionales</taxon>
        <taxon>Vibrionaceae</taxon>
        <taxon>Vibrio</taxon>
    </lineage>
</organism>
<keyword id="KW-0997">Cell inner membrane</keyword>
<keyword id="KW-1003">Cell membrane</keyword>
<keyword id="KW-0472">Membrane</keyword>
<keyword id="KW-0812">Transmembrane</keyword>
<keyword id="KW-1133">Transmembrane helix</keyword>
<sequence length="187" mass="21014">MKQILDFIPLIIFFALYKMYDIYVATGALIAATAIQIVVTYALYKKVEKMQLITFLMVAIFGGMTIFLHDDNFIKWKVTIVYAVFAIGLTVSHVMGKSAIKGMLGKEITLPESVWANINWAWVGFFTFCAGLNIYVAYQLPLDVWVNFKVFGLLAATLVFTVLTGGYIYKHLPKEQNGQSSDVPTDE</sequence>
<reference key="1">
    <citation type="submission" date="2002-12" db="EMBL/GenBank/DDBJ databases">
        <title>Complete genome sequence of Vibrio vulnificus CMCP6.</title>
        <authorList>
            <person name="Rhee J.H."/>
            <person name="Kim S.Y."/>
            <person name="Chung S.S."/>
            <person name="Kim J.J."/>
            <person name="Moon Y.H."/>
            <person name="Jeong H."/>
            <person name="Choy H.E."/>
        </authorList>
    </citation>
    <scope>NUCLEOTIDE SEQUENCE [LARGE SCALE GENOMIC DNA]</scope>
    <source>
        <strain>CMCP6</strain>
    </source>
</reference>
<gene>
    <name evidence="1" type="primary">yciB</name>
    <name type="ordered locus">VV1_3073</name>
</gene>
<accession>P59366</accession>
<feature type="chain" id="PRO_0000206553" description="Inner membrane-spanning protein YciB">
    <location>
        <begin position="1"/>
        <end position="187"/>
    </location>
</feature>
<feature type="transmembrane region" description="Helical" evidence="1">
    <location>
        <begin position="25"/>
        <end position="45"/>
    </location>
</feature>
<feature type="transmembrane region" description="Helical" evidence="1">
    <location>
        <begin position="50"/>
        <end position="70"/>
    </location>
</feature>
<feature type="transmembrane region" description="Helical" evidence="1">
    <location>
        <begin position="76"/>
        <end position="96"/>
    </location>
</feature>
<feature type="transmembrane region" description="Helical" evidence="1">
    <location>
        <begin position="118"/>
        <end position="138"/>
    </location>
</feature>
<feature type="transmembrane region" description="Helical" evidence="1">
    <location>
        <begin position="148"/>
        <end position="168"/>
    </location>
</feature>
<protein>
    <recommendedName>
        <fullName evidence="1">Inner membrane-spanning protein YciB</fullName>
    </recommendedName>
</protein>
<dbReference type="EMBL" id="AE016795">
    <property type="protein sequence ID" value="AAO11397.2"/>
    <property type="molecule type" value="Genomic_DNA"/>
</dbReference>
<dbReference type="RefSeq" id="WP_011080875.1">
    <property type="nucleotide sequence ID" value="NC_004459.3"/>
</dbReference>
<dbReference type="KEGG" id="vvu:VV1_3073"/>
<dbReference type="HOGENOM" id="CLU_089554_2_0_6"/>
<dbReference type="Proteomes" id="UP000002275">
    <property type="component" value="Chromosome 1"/>
</dbReference>
<dbReference type="GO" id="GO:0005886">
    <property type="term" value="C:plasma membrane"/>
    <property type="evidence" value="ECO:0007669"/>
    <property type="project" value="UniProtKB-SubCell"/>
</dbReference>
<dbReference type="HAMAP" id="MF_00189">
    <property type="entry name" value="YciB"/>
    <property type="match status" value="1"/>
</dbReference>
<dbReference type="InterPro" id="IPR006008">
    <property type="entry name" value="YciB"/>
</dbReference>
<dbReference type="NCBIfam" id="TIGR00997">
    <property type="entry name" value="ispZ"/>
    <property type="match status" value="1"/>
</dbReference>
<dbReference type="NCBIfam" id="NF001324">
    <property type="entry name" value="PRK00259.1-2"/>
    <property type="match status" value="1"/>
</dbReference>
<dbReference type="NCBIfam" id="NF001325">
    <property type="entry name" value="PRK00259.1-3"/>
    <property type="match status" value="1"/>
</dbReference>
<dbReference type="PANTHER" id="PTHR36917:SF1">
    <property type="entry name" value="INNER MEMBRANE-SPANNING PROTEIN YCIB"/>
    <property type="match status" value="1"/>
</dbReference>
<dbReference type="PANTHER" id="PTHR36917">
    <property type="entry name" value="INTRACELLULAR SEPTATION PROTEIN A-RELATED"/>
    <property type="match status" value="1"/>
</dbReference>
<dbReference type="Pfam" id="PF04279">
    <property type="entry name" value="IspA"/>
    <property type="match status" value="1"/>
</dbReference>
<comment type="function">
    <text evidence="1">Plays a role in cell envelope biogenesis, maintenance of cell envelope integrity and membrane homeostasis.</text>
</comment>
<comment type="subcellular location">
    <subcellularLocation>
        <location evidence="1">Cell inner membrane</location>
        <topology evidence="1">Multi-pass membrane protein</topology>
    </subcellularLocation>
</comment>
<comment type="similarity">
    <text evidence="1">Belongs to the YciB family.</text>
</comment>